<reference key="1">
    <citation type="journal article" date="1992" name="Genomics">
        <title>Genetic variability of the murine creatine kinase B gene locus and related pseudogenes in different inbred strains of mice.</title>
        <authorList>
            <person name="van Deursen J."/>
            <person name="Schepens J."/>
            <person name="Peters W."/>
            <person name="Meijer D."/>
            <person name="Grosveld G."/>
            <person name="Hendriks W."/>
            <person name="Wieringa B."/>
        </authorList>
    </citation>
    <scope>NUCLEOTIDE SEQUENCE [GENOMIC DNA]</scope>
</reference>
<reference key="2">
    <citation type="submission" date="1993-02" db="EMBL/GenBank/DDBJ databases">
        <authorList>
            <person name="Pentecost B.T."/>
        </authorList>
    </citation>
    <scope>NUCLEOTIDE SEQUENCE [GENOMIC DNA]</scope>
</reference>
<reference key="3">
    <citation type="journal article" date="2005" name="Science">
        <title>The transcriptional landscape of the mammalian genome.</title>
        <authorList>
            <person name="Carninci P."/>
            <person name="Kasukawa T."/>
            <person name="Katayama S."/>
            <person name="Gough J."/>
            <person name="Frith M.C."/>
            <person name="Maeda N."/>
            <person name="Oyama R."/>
            <person name="Ravasi T."/>
            <person name="Lenhard B."/>
            <person name="Wells C."/>
            <person name="Kodzius R."/>
            <person name="Shimokawa K."/>
            <person name="Bajic V.B."/>
            <person name="Brenner S.E."/>
            <person name="Batalov S."/>
            <person name="Forrest A.R."/>
            <person name="Zavolan M."/>
            <person name="Davis M.J."/>
            <person name="Wilming L.G."/>
            <person name="Aidinis V."/>
            <person name="Allen J.E."/>
            <person name="Ambesi-Impiombato A."/>
            <person name="Apweiler R."/>
            <person name="Aturaliya R.N."/>
            <person name="Bailey T.L."/>
            <person name="Bansal M."/>
            <person name="Baxter L."/>
            <person name="Beisel K.W."/>
            <person name="Bersano T."/>
            <person name="Bono H."/>
            <person name="Chalk A.M."/>
            <person name="Chiu K.P."/>
            <person name="Choudhary V."/>
            <person name="Christoffels A."/>
            <person name="Clutterbuck D.R."/>
            <person name="Crowe M.L."/>
            <person name="Dalla E."/>
            <person name="Dalrymple B.P."/>
            <person name="de Bono B."/>
            <person name="Della Gatta G."/>
            <person name="di Bernardo D."/>
            <person name="Down T."/>
            <person name="Engstrom P."/>
            <person name="Fagiolini M."/>
            <person name="Faulkner G."/>
            <person name="Fletcher C.F."/>
            <person name="Fukushima T."/>
            <person name="Furuno M."/>
            <person name="Futaki S."/>
            <person name="Gariboldi M."/>
            <person name="Georgii-Hemming P."/>
            <person name="Gingeras T.R."/>
            <person name="Gojobori T."/>
            <person name="Green R.E."/>
            <person name="Gustincich S."/>
            <person name="Harbers M."/>
            <person name="Hayashi Y."/>
            <person name="Hensch T.K."/>
            <person name="Hirokawa N."/>
            <person name="Hill D."/>
            <person name="Huminiecki L."/>
            <person name="Iacono M."/>
            <person name="Ikeo K."/>
            <person name="Iwama A."/>
            <person name="Ishikawa T."/>
            <person name="Jakt M."/>
            <person name="Kanapin A."/>
            <person name="Katoh M."/>
            <person name="Kawasawa Y."/>
            <person name="Kelso J."/>
            <person name="Kitamura H."/>
            <person name="Kitano H."/>
            <person name="Kollias G."/>
            <person name="Krishnan S.P."/>
            <person name="Kruger A."/>
            <person name="Kummerfeld S.K."/>
            <person name="Kurochkin I.V."/>
            <person name="Lareau L.F."/>
            <person name="Lazarevic D."/>
            <person name="Lipovich L."/>
            <person name="Liu J."/>
            <person name="Liuni S."/>
            <person name="McWilliam S."/>
            <person name="Madan Babu M."/>
            <person name="Madera M."/>
            <person name="Marchionni L."/>
            <person name="Matsuda H."/>
            <person name="Matsuzawa S."/>
            <person name="Miki H."/>
            <person name="Mignone F."/>
            <person name="Miyake S."/>
            <person name="Morris K."/>
            <person name="Mottagui-Tabar S."/>
            <person name="Mulder N."/>
            <person name="Nakano N."/>
            <person name="Nakauchi H."/>
            <person name="Ng P."/>
            <person name="Nilsson R."/>
            <person name="Nishiguchi S."/>
            <person name="Nishikawa S."/>
            <person name="Nori F."/>
            <person name="Ohara O."/>
            <person name="Okazaki Y."/>
            <person name="Orlando V."/>
            <person name="Pang K.C."/>
            <person name="Pavan W.J."/>
            <person name="Pavesi G."/>
            <person name="Pesole G."/>
            <person name="Petrovsky N."/>
            <person name="Piazza S."/>
            <person name="Reed J."/>
            <person name="Reid J.F."/>
            <person name="Ring B.Z."/>
            <person name="Ringwald M."/>
            <person name="Rost B."/>
            <person name="Ruan Y."/>
            <person name="Salzberg S.L."/>
            <person name="Sandelin A."/>
            <person name="Schneider C."/>
            <person name="Schoenbach C."/>
            <person name="Sekiguchi K."/>
            <person name="Semple C.A."/>
            <person name="Seno S."/>
            <person name="Sessa L."/>
            <person name="Sheng Y."/>
            <person name="Shibata Y."/>
            <person name="Shimada H."/>
            <person name="Shimada K."/>
            <person name="Silva D."/>
            <person name="Sinclair B."/>
            <person name="Sperling S."/>
            <person name="Stupka E."/>
            <person name="Sugiura K."/>
            <person name="Sultana R."/>
            <person name="Takenaka Y."/>
            <person name="Taki K."/>
            <person name="Tammoja K."/>
            <person name="Tan S.L."/>
            <person name="Tang S."/>
            <person name="Taylor M.S."/>
            <person name="Tegner J."/>
            <person name="Teichmann S.A."/>
            <person name="Ueda H.R."/>
            <person name="van Nimwegen E."/>
            <person name="Verardo R."/>
            <person name="Wei C.L."/>
            <person name="Yagi K."/>
            <person name="Yamanishi H."/>
            <person name="Zabarovsky E."/>
            <person name="Zhu S."/>
            <person name="Zimmer A."/>
            <person name="Hide W."/>
            <person name="Bult C."/>
            <person name="Grimmond S.M."/>
            <person name="Teasdale R.D."/>
            <person name="Liu E.T."/>
            <person name="Brusic V."/>
            <person name="Quackenbush J."/>
            <person name="Wahlestedt C."/>
            <person name="Mattick J.S."/>
            <person name="Hume D.A."/>
            <person name="Kai C."/>
            <person name="Sasaki D."/>
            <person name="Tomaru Y."/>
            <person name="Fukuda S."/>
            <person name="Kanamori-Katayama M."/>
            <person name="Suzuki M."/>
            <person name="Aoki J."/>
            <person name="Arakawa T."/>
            <person name="Iida J."/>
            <person name="Imamura K."/>
            <person name="Itoh M."/>
            <person name="Kato T."/>
            <person name="Kawaji H."/>
            <person name="Kawagashira N."/>
            <person name="Kawashima T."/>
            <person name="Kojima M."/>
            <person name="Kondo S."/>
            <person name="Konno H."/>
            <person name="Nakano K."/>
            <person name="Ninomiya N."/>
            <person name="Nishio T."/>
            <person name="Okada M."/>
            <person name="Plessy C."/>
            <person name="Shibata K."/>
            <person name="Shiraki T."/>
            <person name="Suzuki S."/>
            <person name="Tagami M."/>
            <person name="Waki K."/>
            <person name="Watahiki A."/>
            <person name="Okamura-Oho Y."/>
            <person name="Suzuki H."/>
            <person name="Kawai J."/>
            <person name="Hayashizaki Y."/>
        </authorList>
    </citation>
    <scope>NUCLEOTIDE SEQUENCE [LARGE SCALE MRNA]</scope>
    <source>
        <strain>C57BL/6J</strain>
        <tissue>Embryonic head</tissue>
        <tissue>Kidney</tissue>
        <tissue>Sympathetic ganglion</tissue>
        <tissue>Wolffian duct</tissue>
    </source>
</reference>
<reference key="4">
    <citation type="journal article" date="2004" name="Genome Res.">
        <title>The status, quality, and expansion of the NIH full-length cDNA project: the Mammalian Gene Collection (MGC).</title>
        <authorList>
            <consortium name="The MGC Project Team"/>
        </authorList>
    </citation>
    <scope>NUCLEOTIDE SEQUENCE [LARGE SCALE MRNA]</scope>
    <source>
        <strain>FVB/N</strain>
        <tissue>Colon</tissue>
    </source>
</reference>
<reference key="5">
    <citation type="submission" date="2009-01" db="UniProtKB">
        <authorList>
            <person name="Lubec G."/>
            <person name="Klug S."/>
            <person name="Kang S.U."/>
            <person name="Sunyer B."/>
            <person name="Chen W.-Q."/>
        </authorList>
    </citation>
    <scope>PROTEIN SEQUENCE OF 12-43; 87-96; 108-130; 139-148; 157-172; 178-209; 224-236; 253-265; 268-292 AND 320-381</scope>
    <scope>IDENTIFICATION BY MASS SPECTROMETRY</scope>
    <source>
        <strain>C57BL/6J</strain>
        <strain>OF1</strain>
        <tissue>Brain</tissue>
        <tissue>Hippocampus</tissue>
    </source>
</reference>
<reference key="6">
    <citation type="journal article" date="1986" name="Nucleic Acids Res.">
        <title>The 3' non-coding region of the mouse brain B creatine kinase mRNA: a sequence with exceptional homology among species.</title>
        <authorList>
            <person name="Papenbrock T."/>
            <person name="Wille W."/>
        </authorList>
    </citation>
    <scope>NUCLEOTIDE SEQUENCE [MRNA] OF 354-381</scope>
    <source>
        <strain>C57BL/6J</strain>
        <tissue>Cerebellum</tissue>
    </source>
</reference>
<reference key="7">
    <citation type="journal article" date="2005" name="Proteomics">
        <title>Quantitative analysis of both protein expression and serine / threonine post-translational modifications through stable isotope labeling with dithiothreitol.</title>
        <authorList>
            <person name="Vosseller K."/>
            <person name="Hansen K.C."/>
            <person name="Chalkley R.J."/>
            <person name="Trinidad J.C."/>
            <person name="Wells L."/>
            <person name="Hart G.W."/>
            <person name="Burlingame A.L."/>
        </authorList>
    </citation>
    <scope>IDENTIFICATION BY MASS SPECTROMETRY [LARGE SCALE ANALYSIS]</scope>
</reference>
<reference key="8">
    <citation type="journal article" date="2006" name="Biochemistry">
        <title>Endogenously nitrated proteins in mouse brain: links to neurodegenerative disease.</title>
        <authorList>
            <person name="Sacksteder C.A."/>
            <person name="Qian W.-J."/>
            <person name="Knyushko T.V."/>
            <person name="Wang H."/>
            <person name="Chin M.H."/>
            <person name="Lacan G."/>
            <person name="Melega W.P."/>
            <person name="Camp D.G. II"/>
            <person name="Smith R.D."/>
            <person name="Smith D.J."/>
            <person name="Squier T.C."/>
            <person name="Bigelow D.J."/>
        </authorList>
    </citation>
    <scope>NITRATION [LARGE SCALE ANALYSIS] AT TYR-269</scope>
    <scope>IDENTIFICATION BY MASS SPECTROMETRY [LARGE SCALE ANALYSIS]</scope>
    <source>
        <tissue>Brain</tissue>
    </source>
</reference>
<reference key="9">
    <citation type="journal article" date="2006" name="Mol. Cell. Proteomics">
        <title>Comprehensive identification of phosphorylation sites in postsynaptic density preparations.</title>
        <authorList>
            <person name="Trinidad J.C."/>
            <person name="Specht C.G."/>
            <person name="Thalhammer A."/>
            <person name="Schoepfer R."/>
            <person name="Burlingame A.L."/>
        </authorList>
    </citation>
    <scope>IDENTIFICATION BY MASS SPECTROMETRY [LARGE SCALE ANALYSIS]</scope>
    <source>
        <tissue>Brain</tissue>
    </source>
</reference>
<reference key="10">
    <citation type="journal article" date="2007" name="J. Biol. Chem.">
        <title>Ankyrin repeat and suppressors of cytokine signaling box protein asb-9 targets creatine kinase B for degradation.</title>
        <authorList>
            <person name="Debrincat M.A."/>
            <person name="Zhang J.G."/>
            <person name="Willson T.A."/>
            <person name="Silke J."/>
            <person name="Connolly L.M."/>
            <person name="Simpson R.J."/>
            <person name="Alexander W.S."/>
            <person name="Nicola N.A."/>
            <person name="Kile B.T."/>
            <person name="Hilton D.J."/>
        </authorList>
    </citation>
    <scope>UBIQUITINATION</scope>
</reference>
<reference key="11">
    <citation type="journal article" date="2008" name="Hum. Mol. Genet.">
        <title>HMSN/ACC truncation mutations disrupt brain-type creatine kinase-dependant activation of K+/Cl- co-transporter 3.</title>
        <authorList>
            <person name="Salin-Cantegrel A."/>
            <person name="Shekarabi M."/>
            <person name="Holbert S."/>
            <person name="Dion P."/>
            <person name="Rochefort D."/>
            <person name="Laganiere J."/>
            <person name="Dacal S."/>
            <person name="Hince P."/>
            <person name="Karemera L."/>
            <person name="Gaspar C."/>
            <person name="Lapointe J.Y."/>
            <person name="Rouleau G.A."/>
        </authorList>
    </citation>
    <scope>TISSUE SPECIFICITY</scope>
</reference>
<reference key="12">
    <citation type="journal article" date="2008" name="J. Proteome Res.">
        <title>Large-scale identification and evolution indexing of tyrosine phosphorylation sites from murine brain.</title>
        <authorList>
            <person name="Ballif B.A."/>
            <person name="Carey G.R."/>
            <person name="Sunyaev S.R."/>
            <person name="Gygi S.P."/>
        </authorList>
    </citation>
    <scope>PHOSPHORYLATION [LARGE SCALE ANALYSIS] AT TYR-125</scope>
    <scope>IDENTIFICATION BY MASS SPECTROMETRY [LARGE SCALE ANALYSIS]</scope>
    <source>
        <tissue>Brain</tissue>
    </source>
</reference>
<reference key="13">
    <citation type="journal article" date="2010" name="Cell">
        <title>A tissue-specific atlas of mouse protein phosphorylation and expression.</title>
        <authorList>
            <person name="Huttlin E.L."/>
            <person name="Jedrychowski M.P."/>
            <person name="Elias J.E."/>
            <person name="Goswami T."/>
            <person name="Rad R."/>
            <person name="Beausoleil S.A."/>
            <person name="Villen J."/>
            <person name="Haas W."/>
            <person name="Sowa M.E."/>
            <person name="Gygi S.P."/>
        </authorList>
    </citation>
    <scope>PHOSPHORYLATION [LARGE SCALE ANALYSIS] AT THR-35; SER-199 AND THR-322</scope>
    <scope>IDENTIFICATION BY MASS SPECTROMETRY [LARGE SCALE ANALYSIS]</scope>
    <source>
        <tissue>Brain</tissue>
        <tissue>Brown adipose tissue</tissue>
        <tissue>Heart</tissue>
        <tissue>Kidney</tissue>
        <tissue>Liver</tissue>
        <tissue>Lung</tissue>
        <tissue>Pancreas</tissue>
        <tissue>Spleen</tissue>
        <tissue>Testis</tissue>
    </source>
</reference>
<reference key="14">
    <citation type="journal article" date="2021" name="Nature">
        <title>Creatine kinase B controls futile creatine cycling in thermogenic fat.</title>
        <authorList>
            <person name="Rahbani J.F."/>
            <person name="Roesler A."/>
            <person name="Hussain M.F."/>
            <person name="Samborska B."/>
            <person name="Dykstra C.B."/>
            <person name="Tsai L."/>
            <person name="Jedrychowski M.P."/>
            <person name="Vergnes L."/>
            <person name="Reue K."/>
            <person name="Spiegelman B.M."/>
            <person name="Kazak L."/>
        </authorList>
    </citation>
    <scope>FUNCTION</scope>
    <scope>CATALYTIC ACTIVITY</scope>
    <scope>SUBCELLULAR LOCATION</scope>
    <scope>DOMAIN</scope>
    <scope>INDUCTION</scope>
    <scope>DISRUPTION PHENOTYPE</scope>
    <scope>MUTAGENESIS OF 130-ARG--ARG-138 AND CYS-283</scope>
</reference>
<proteinExistence type="evidence at protein level"/>
<dbReference type="EC" id="2.7.3.2" evidence="8"/>
<dbReference type="EMBL" id="M74149">
    <property type="protein sequence ID" value="AAA37462.1"/>
    <property type="molecule type" value="Genomic_DNA"/>
</dbReference>
<dbReference type="EMBL" id="L09069">
    <property type="protein sequence ID" value="AAA37455.1"/>
    <property type="molecule type" value="Genomic_DNA"/>
</dbReference>
<dbReference type="EMBL" id="AK002467">
    <property type="protein sequence ID" value="BAB22121.1"/>
    <property type="molecule type" value="mRNA"/>
</dbReference>
<dbReference type="EMBL" id="AK014299">
    <property type="protein sequence ID" value="BAB29254.1"/>
    <property type="molecule type" value="mRNA"/>
</dbReference>
<dbReference type="EMBL" id="AK148885">
    <property type="protein sequence ID" value="BAE28690.1"/>
    <property type="molecule type" value="mRNA"/>
</dbReference>
<dbReference type="EMBL" id="AK152388">
    <property type="protein sequence ID" value="BAE31176.1"/>
    <property type="molecule type" value="mRNA"/>
</dbReference>
<dbReference type="EMBL" id="AK153484">
    <property type="protein sequence ID" value="BAE32032.1"/>
    <property type="molecule type" value="mRNA"/>
</dbReference>
<dbReference type="EMBL" id="AK166980">
    <property type="protein sequence ID" value="BAE39162.1"/>
    <property type="molecule type" value="mRNA"/>
</dbReference>
<dbReference type="EMBL" id="AK161990">
    <property type="protein sequence ID" value="BAE36669.1"/>
    <property type="molecule type" value="mRNA"/>
</dbReference>
<dbReference type="EMBL" id="AK167034">
    <property type="protein sequence ID" value="BAE39205.1"/>
    <property type="molecule type" value="mRNA"/>
</dbReference>
<dbReference type="EMBL" id="BC015271">
    <property type="protein sequence ID" value="AAH15271.1"/>
    <property type="molecule type" value="mRNA"/>
</dbReference>
<dbReference type="EMBL" id="BC106109">
    <property type="protein sequence ID" value="AAI06110.2"/>
    <property type="molecule type" value="mRNA"/>
</dbReference>
<dbReference type="EMBL" id="X04591">
    <property type="protein sequence ID" value="CAA28259.1"/>
    <property type="molecule type" value="mRNA"/>
</dbReference>
<dbReference type="CCDS" id="CCDS26183.1"/>
<dbReference type="PIR" id="A42078">
    <property type="entry name" value="A42078"/>
</dbReference>
<dbReference type="RefSeq" id="NP_067248.1">
    <property type="nucleotide sequence ID" value="NM_021273.4"/>
</dbReference>
<dbReference type="SMR" id="Q04447"/>
<dbReference type="BioGRID" id="198725">
    <property type="interactions" value="35"/>
</dbReference>
<dbReference type="CORUM" id="Q04447"/>
<dbReference type="FunCoup" id="Q04447">
    <property type="interactions" value="714"/>
</dbReference>
<dbReference type="IntAct" id="Q04447">
    <property type="interactions" value="10"/>
</dbReference>
<dbReference type="MINT" id="Q04447"/>
<dbReference type="STRING" id="10090.ENSMUSP00000001304"/>
<dbReference type="GlyGen" id="Q04447">
    <property type="glycosylation" value="1 site, 1 O-linked glycan (1 site)"/>
</dbReference>
<dbReference type="iPTMnet" id="Q04447"/>
<dbReference type="PhosphoSitePlus" id="Q04447"/>
<dbReference type="SwissPalm" id="Q04447"/>
<dbReference type="REPRODUCTION-2DPAGE" id="Q04447"/>
<dbReference type="CPTAC" id="non-CPTAC-3977"/>
<dbReference type="jPOST" id="Q04447"/>
<dbReference type="PaxDb" id="10090-ENSMUSP00000001304"/>
<dbReference type="PeptideAtlas" id="Q04447"/>
<dbReference type="ProteomicsDB" id="263509"/>
<dbReference type="Pumba" id="Q04447"/>
<dbReference type="Antibodypedia" id="28">
    <property type="antibodies" value="892 antibodies from 38 providers"/>
</dbReference>
<dbReference type="DNASU" id="12709"/>
<dbReference type="Ensembl" id="ENSMUST00000001304.9">
    <property type="protein sequence ID" value="ENSMUSP00000001304.8"/>
    <property type="gene ID" value="ENSMUSG00000001270.10"/>
</dbReference>
<dbReference type="GeneID" id="12709"/>
<dbReference type="KEGG" id="mmu:12709"/>
<dbReference type="UCSC" id="uc007pdn.2">
    <property type="organism name" value="mouse"/>
</dbReference>
<dbReference type="AGR" id="MGI:88407"/>
<dbReference type="CTD" id="1152"/>
<dbReference type="MGI" id="MGI:88407">
    <property type="gene designation" value="Ckb"/>
</dbReference>
<dbReference type="VEuPathDB" id="HostDB:ENSMUSG00000001270"/>
<dbReference type="eggNOG" id="KOG3581">
    <property type="taxonomic scope" value="Eukaryota"/>
</dbReference>
<dbReference type="GeneTree" id="ENSGT00950000182772"/>
<dbReference type="HOGENOM" id="CLU_019868_4_2_1"/>
<dbReference type="InParanoid" id="Q04447"/>
<dbReference type="OMA" id="MRICAFN"/>
<dbReference type="OrthoDB" id="430219at2759"/>
<dbReference type="PhylomeDB" id="Q04447"/>
<dbReference type="TreeFam" id="TF314214"/>
<dbReference type="BRENDA" id="2.7.3.2">
    <property type="organism ID" value="3474"/>
</dbReference>
<dbReference type="Reactome" id="R-MMU-71288">
    <property type="pathway name" value="Creatine metabolism"/>
</dbReference>
<dbReference type="Reactome" id="R-MMU-9696264">
    <property type="pathway name" value="RND3 GTPase cycle"/>
</dbReference>
<dbReference type="BioGRID-ORCS" id="12709">
    <property type="hits" value="2 hits in 79 CRISPR screens"/>
</dbReference>
<dbReference type="CD-CODE" id="CE726F99">
    <property type="entry name" value="Postsynaptic density"/>
</dbReference>
<dbReference type="ChiTaRS" id="Ckb">
    <property type="organism name" value="mouse"/>
</dbReference>
<dbReference type="PRO" id="PR:Q04447"/>
<dbReference type="Proteomes" id="UP000000589">
    <property type="component" value="Chromosome 12"/>
</dbReference>
<dbReference type="RNAct" id="Q04447">
    <property type="molecule type" value="protein"/>
</dbReference>
<dbReference type="Bgee" id="ENSMUSG00000001270">
    <property type="expression patterns" value="Expressed in cerebellar cortex and 134 other cell types or tissues"/>
</dbReference>
<dbReference type="GO" id="GO:0005829">
    <property type="term" value="C:cytosol"/>
    <property type="evidence" value="ECO:0007669"/>
    <property type="project" value="UniProtKB-SubCell"/>
</dbReference>
<dbReference type="GO" id="GO:0005739">
    <property type="term" value="C:mitochondrion"/>
    <property type="evidence" value="ECO:0000314"/>
    <property type="project" value="UniProtKB"/>
</dbReference>
<dbReference type="GO" id="GO:0043209">
    <property type="term" value="C:myelin sheath"/>
    <property type="evidence" value="ECO:0007005"/>
    <property type="project" value="UniProtKB"/>
</dbReference>
<dbReference type="GO" id="GO:0005886">
    <property type="term" value="C:plasma membrane"/>
    <property type="evidence" value="ECO:0007669"/>
    <property type="project" value="UniProtKB-SubCell"/>
</dbReference>
<dbReference type="GO" id="GO:0005524">
    <property type="term" value="F:ATP binding"/>
    <property type="evidence" value="ECO:0007669"/>
    <property type="project" value="UniProtKB-KW"/>
</dbReference>
<dbReference type="GO" id="GO:0004111">
    <property type="term" value="F:creatine kinase activity"/>
    <property type="evidence" value="ECO:0000314"/>
    <property type="project" value="UniProtKB"/>
</dbReference>
<dbReference type="GO" id="GO:0031625">
    <property type="term" value="F:ubiquitin protein ligase binding"/>
    <property type="evidence" value="ECO:0007669"/>
    <property type="project" value="Ensembl"/>
</dbReference>
<dbReference type="GO" id="GO:0140651">
    <property type="term" value="P:futile creatine cycle"/>
    <property type="evidence" value="ECO:0000314"/>
    <property type="project" value="UniProt"/>
</dbReference>
<dbReference type="GO" id="GO:0046314">
    <property type="term" value="P:phosphocreatine biosynthetic process"/>
    <property type="evidence" value="ECO:0007669"/>
    <property type="project" value="Ensembl"/>
</dbReference>
<dbReference type="CDD" id="cd00716">
    <property type="entry name" value="creatine_kinase_like"/>
    <property type="match status" value="1"/>
</dbReference>
<dbReference type="FunFam" id="3.30.590.10:FF:000026">
    <property type="entry name" value="Creatine kinase B-type"/>
    <property type="match status" value="1"/>
</dbReference>
<dbReference type="FunFam" id="1.10.135.10:FF:000001">
    <property type="entry name" value="Creatine kinase M-type"/>
    <property type="match status" value="1"/>
</dbReference>
<dbReference type="Gene3D" id="1.10.135.10">
    <property type="entry name" value="ATP:guanido phosphotransferase, N-terminal domain"/>
    <property type="match status" value="1"/>
</dbReference>
<dbReference type="Gene3D" id="3.30.590.10">
    <property type="entry name" value="Glutamine synthetase/guanido kinase, catalytic domain"/>
    <property type="match status" value="1"/>
</dbReference>
<dbReference type="InterPro" id="IPR000749">
    <property type="entry name" value="ATP-guanido_PTrfase"/>
</dbReference>
<dbReference type="InterPro" id="IPR022415">
    <property type="entry name" value="ATP-guanido_PTrfase_AS"/>
</dbReference>
<dbReference type="InterPro" id="IPR022414">
    <property type="entry name" value="ATP-guanido_PTrfase_cat"/>
</dbReference>
<dbReference type="InterPro" id="IPR022413">
    <property type="entry name" value="ATP-guanido_PTrfase_N"/>
</dbReference>
<dbReference type="InterPro" id="IPR036802">
    <property type="entry name" value="ATP-guanido_PTrfase_N_sf"/>
</dbReference>
<dbReference type="InterPro" id="IPR014746">
    <property type="entry name" value="Gln_synth/guanido_kin_cat_dom"/>
</dbReference>
<dbReference type="PANTHER" id="PTHR11547">
    <property type="entry name" value="ARGININE OR CREATINE KINASE"/>
    <property type="match status" value="1"/>
</dbReference>
<dbReference type="PANTHER" id="PTHR11547:SF23">
    <property type="entry name" value="CREATINE KINASE B-TYPE"/>
    <property type="match status" value="1"/>
</dbReference>
<dbReference type="Pfam" id="PF00217">
    <property type="entry name" value="ATP-gua_Ptrans"/>
    <property type="match status" value="1"/>
</dbReference>
<dbReference type="Pfam" id="PF02807">
    <property type="entry name" value="ATP-gua_PtransN"/>
    <property type="match status" value="1"/>
</dbReference>
<dbReference type="SUPFAM" id="SSF55931">
    <property type="entry name" value="Glutamine synthetase/guanido kinase"/>
    <property type="match status" value="1"/>
</dbReference>
<dbReference type="SUPFAM" id="SSF48034">
    <property type="entry name" value="Guanido kinase N-terminal domain"/>
    <property type="match status" value="1"/>
</dbReference>
<dbReference type="PROSITE" id="PS00112">
    <property type="entry name" value="PHOSPHAGEN_KINASE"/>
    <property type="match status" value="1"/>
</dbReference>
<dbReference type="PROSITE" id="PS51510">
    <property type="entry name" value="PHOSPHAGEN_KINASE_C"/>
    <property type="match status" value="1"/>
</dbReference>
<dbReference type="PROSITE" id="PS51509">
    <property type="entry name" value="PHOSPHAGEN_KINASE_N"/>
    <property type="match status" value="1"/>
</dbReference>
<keyword id="KW-0067">ATP-binding</keyword>
<keyword id="KW-1003">Cell membrane</keyword>
<keyword id="KW-0963">Cytoplasm</keyword>
<keyword id="KW-0903">Direct protein sequencing</keyword>
<keyword id="KW-1017">Isopeptide bond</keyword>
<keyword id="KW-0418">Kinase</keyword>
<keyword id="KW-0472">Membrane</keyword>
<keyword id="KW-0496">Mitochondrion</keyword>
<keyword id="KW-0944">Nitration</keyword>
<keyword id="KW-0547">Nucleotide-binding</keyword>
<keyword id="KW-0597">Phosphoprotein</keyword>
<keyword id="KW-1185">Reference proteome</keyword>
<keyword id="KW-0808">Transferase</keyword>
<keyword id="KW-0832">Ubl conjugation</keyword>
<comment type="function">
    <text evidence="8 10">Reversibly catalyzes the transfer of phosphate between ATP and various phosphogens (e.g. creatine phosphate) (PubMed:33597756). Creatine kinase isoenzymes play a central role in energy transduction in tissues with large, fluctuating energy demands, such as skeletal muscle, heart, brain and spermatozoa (Probable). Acts as a key regulator of adaptive thermogenesis as part of the futile creatine cycle: localizes to the mitochondria of thermogenic fat cells and acts by mediating phosphorylation of creatine to initiate a futile cycle of creatine phosphorylation and dephosphorylation (PubMed:33597756). During the futile creatine cycle, creatine and N-phosphocreatine are in a futile cycle, which dissipates the high energy charge of N-phosphocreatine as heat without performing any mechanical or chemical work (PubMed:33597756).</text>
</comment>
<comment type="catalytic activity">
    <reaction evidence="5 8">
        <text>creatine + ATP = N-phosphocreatine + ADP + H(+)</text>
        <dbReference type="Rhea" id="RHEA:17157"/>
        <dbReference type="ChEBI" id="CHEBI:15378"/>
        <dbReference type="ChEBI" id="CHEBI:30616"/>
        <dbReference type="ChEBI" id="CHEBI:57947"/>
        <dbReference type="ChEBI" id="CHEBI:58092"/>
        <dbReference type="ChEBI" id="CHEBI:456216"/>
        <dbReference type="EC" id="2.7.3.2"/>
    </reaction>
    <physiologicalReaction direction="left-to-right" evidence="8">
        <dbReference type="Rhea" id="RHEA:17158"/>
    </physiologicalReaction>
</comment>
<comment type="subunit">
    <text evidence="2">Dimer of identical or non-identical chains, which can be either B (brain type) or M (muscle type). With MM being the major form in skeletal muscle and myocardium, MB existing in myocardium, and BB existing in many tissues, especially brain. Interacts with SLC12A6 (via C-terminus); the interaction may be required for SLC12A6 potassium-chloride cotransport activity (By similarity).</text>
</comment>
<comment type="subcellular location">
    <subcellularLocation>
        <location evidence="11">Cytoplasm</location>
        <location evidence="11">Cytosol</location>
    </subcellularLocation>
    <subcellularLocation>
        <location evidence="8">Mitochondrion</location>
    </subcellularLocation>
    <subcellularLocation>
        <location evidence="2">Cell membrane</location>
    </subcellularLocation>
    <text evidence="8">Localizes to the mitochondria of thermogenic fat cells via the internal MTS-like signal (iMTS-L) region.</text>
</comment>
<comment type="tissue specificity">
    <text evidence="7">Expressed in hippocampus and corpus callosum (at protein level).</text>
</comment>
<comment type="induction">
    <text evidence="8">Strongly up-regulated in response to cold in fat cells; expression is dependent on cAMP.</text>
</comment>
<comment type="domain">
    <text evidence="8">The internal MTS-like signal (iMTS-L) mediates targeting to mitochondria thermogenic fat cells.</text>
</comment>
<comment type="PTM">
    <text evidence="2">Ubiquitinated by the ECS(ASB9) complex, leading to its degradation by the proteasome.</text>
</comment>
<comment type="disruption phenotype">
    <text evidence="8">Conditional deletion in adipocytes leads to defective adaptive thermogenesis: defects are caused by abolition of the futile creatine cycle, thereby reducing whole-body energy expenditure and leading to predisposition to obesity.</text>
</comment>
<comment type="similarity">
    <text evidence="3 4">Belongs to the ATP:guanido phosphotransferase family.</text>
</comment>
<sequence>MPFSNSHNTQKLRFPAEDEFPDLSSHNNHMAKVLTPELYAELRAKCTPSGFTLDDAIQTGVDNPGHPYIMTVGAVAGDEESYDVFKDLFDPIIEERHGGYQPSDEHKTDLNPDNLQGGDDLDPNYVLSSRVRTGRSIRGFCLPPHCSRGERRAIEKLAVEALSSLDGDLSGRYYALKSMTEAEQQQLIDDHFLFDKPVSPLLLASGMARDWPDARGIWHNDNKTFLVWINEEDHLRVISMQKGGNMKEVFTRFCTGLTQIETLFKSKNYEFMWNPHLGYILTCPSNLGTGLRAGVHIKLPHLGKHEKFSEVLKRLRLQKRGTGGVDTAAVGGVFDVSNADRLGFSEVELVQMVVDGVKLLIEMEQRLEQGQAIDDLMPAQK</sequence>
<evidence type="ECO:0000250" key="1">
    <source>
        <dbReference type="UniProtKB" id="P07335"/>
    </source>
</evidence>
<evidence type="ECO:0000250" key="2">
    <source>
        <dbReference type="UniProtKB" id="P12277"/>
    </source>
</evidence>
<evidence type="ECO:0000255" key="3">
    <source>
        <dbReference type="PROSITE-ProRule" id="PRU00842"/>
    </source>
</evidence>
<evidence type="ECO:0000255" key="4">
    <source>
        <dbReference type="PROSITE-ProRule" id="PRU00843"/>
    </source>
</evidence>
<evidence type="ECO:0000255" key="5">
    <source>
        <dbReference type="PROSITE-ProRule" id="PRU10029"/>
    </source>
</evidence>
<evidence type="ECO:0000256" key="6">
    <source>
        <dbReference type="SAM" id="MobiDB-lite"/>
    </source>
</evidence>
<evidence type="ECO:0000269" key="7">
    <source>
    </source>
</evidence>
<evidence type="ECO:0000269" key="8">
    <source>
    </source>
</evidence>
<evidence type="ECO:0000303" key="9">
    <source>
    </source>
</evidence>
<evidence type="ECO:0000305" key="10"/>
<evidence type="ECO:0000305" key="11">
    <source>
    </source>
</evidence>
<evidence type="ECO:0000312" key="12">
    <source>
        <dbReference type="MGI" id="MGI:88407"/>
    </source>
</evidence>
<evidence type="ECO:0007744" key="13">
    <source>
    </source>
</evidence>
<evidence type="ECO:0007744" key="14">
    <source>
    </source>
</evidence>
<evidence type="ECO:0007744" key="15">
    <source>
    </source>
</evidence>
<gene>
    <name evidence="9 12" type="primary">Ckb</name>
    <name type="synonym">Ckbb</name>
</gene>
<name>KCRB_MOUSE</name>
<protein>
    <recommendedName>
        <fullName evidence="9">Creatine kinase B-type</fullName>
        <ecNumber evidence="8">2.7.3.2</ecNumber>
    </recommendedName>
    <alternativeName>
        <fullName>B-CK</fullName>
    </alternativeName>
    <alternativeName>
        <fullName>Creatine kinase B chain</fullName>
    </alternativeName>
    <alternativeName>
        <fullName>Creatine phosphokinase B-type</fullName>
        <shortName>CPK-B</shortName>
    </alternativeName>
</protein>
<organism>
    <name type="scientific">Mus musculus</name>
    <name type="common">Mouse</name>
    <dbReference type="NCBI Taxonomy" id="10090"/>
    <lineage>
        <taxon>Eukaryota</taxon>
        <taxon>Metazoa</taxon>
        <taxon>Chordata</taxon>
        <taxon>Craniata</taxon>
        <taxon>Vertebrata</taxon>
        <taxon>Euteleostomi</taxon>
        <taxon>Mammalia</taxon>
        <taxon>Eutheria</taxon>
        <taxon>Euarchontoglires</taxon>
        <taxon>Glires</taxon>
        <taxon>Rodentia</taxon>
        <taxon>Myomorpha</taxon>
        <taxon>Muroidea</taxon>
        <taxon>Muridae</taxon>
        <taxon>Murinae</taxon>
        <taxon>Mus</taxon>
        <taxon>Mus</taxon>
    </lineage>
</organism>
<feature type="chain" id="PRO_0000211967" description="Creatine kinase B-type">
    <location>
        <begin position="1"/>
        <end position="381"/>
    </location>
</feature>
<feature type="domain" description="Phosphagen kinase N-terminal" evidence="3">
    <location>
        <begin position="11"/>
        <end position="98"/>
    </location>
</feature>
<feature type="domain" description="Phosphagen kinase C-terminal" evidence="4">
    <location>
        <begin position="125"/>
        <end position="367"/>
    </location>
</feature>
<feature type="region of interest" description="Disordered" evidence="6">
    <location>
        <begin position="96"/>
        <end position="123"/>
    </location>
</feature>
<feature type="region of interest" description="Internal MTS-like signal" evidence="8">
    <location>
        <begin position="130"/>
        <end position="138"/>
    </location>
</feature>
<feature type="compositionally biased region" description="Basic and acidic residues" evidence="6">
    <location>
        <begin position="96"/>
        <end position="110"/>
    </location>
</feature>
<feature type="binding site" evidence="2">
    <location>
        <position position="72"/>
    </location>
    <ligand>
        <name>creatine</name>
        <dbReference type="ChEBI" id="CHEBI:57947"/>
    </ligand>
</feature>
<feature type="binding site" evidence="4">
    <location>
        <begin position="128"/>
        <end position="132"/>
    </location>
    <ligand>
        <name>ATP</name>
        <dbReference type="ChEBI" id="CHEBI:30616"/>
    </ligand>
</feature>
<feature type="binding site" evidence="4">
    <location>
        <position position="130"/>
    </location>
    <ligand>
        <name>ATP</name>
        <dbReference type="ChEBI" id="CHEBI:30616"/>
    </ligand>
</feature>
<feature type="binding site" evidence="4">
    <location>
        <position position="132"/>
    </location>
    <ligand>
        <name>ATP</name>
        <dbReference type="ChEBI" id="CHEBI:30616"/>
    </ligand>
</feature>
<feature type="binding site" evidence="4">
    <location>
        <position position="191"/>
    </location>
    <ligand>
        <name>ATP</name>
        <dbReference type="ChEBI" id="CHEBI:30616"/>
    </ligand>
</feature>
<feature type="binding site" evidence="2">
    <location>
        <position position="232"/>
    </location>
    <ligand>
        <name>creatine</name>
        <dbReference type="ChEBI" id="CHEBI:57947"/>
    </ligand>
</feature>
<feature type="binding site" evidence="4">
    <location>
        <position position="236"/>
    </location>
    <ligand>
        <name>ATP</name>
        <dbReference type="ChEBI" id="CHEBI:30616"/>
    </ligand>
</feature>
<feature type="binding site" evidence="2">
    <location>
        <position position="285"/>
    </location>
    <ligand>
        <name>creatine</name>
        <dbReference type="ChEBI" id="CHEBI:57947"/>
    </ligand>
</feature>
<feature type="binding site" evidence="4">
    <location>
        <position position="292"/>
    </location>
    <ligand>
        <name>ATP</name>
        <dbReference type="ChEBI" id="CHEBI:30616"/>
    </ligand>
</feature>
<feature type="binding site" evidence="4">
    <location>
        <begin position="320"/>
        <end position="325"/>
    </location>
    <ligand>
        <name>ATP</name>
        <dbReference type="ChEBI" id="CHEBI:30616"/>
    </ligand>
</feature>
<feature type="binding site" evidence="4">
    <location>
        <position position="320"/>
    </location>
    <ligand>
        <name>ATP</name>
        <dbReference type="ChEBI" id="CHEBI:30616"/>
    </ligand>
</feature>
<feature type="binding site" evidence="4">
    <location>
        <position position="335"/>
    </location>
    <ligand>
        <name>ATP</name>
        <dbReference type="ChEBI" id="CHEBI:30616"/>
    </ligand>
</feature>
<feature type="modified residue" description="Phosphoserine" evidence="2">
    <location>
        <position position="4"/>
    </location>
</feature>
<feature type="modified residue" description="Phosphothreonine" evidence="15">
    <location>
        <position position="35"/>
    </location>
</feature>
<feature type="modified residue" description="Phosphotyrosine" evidence="14">
    <location>
        <position position="125"/>
    </location>
</feature>
<feature type="modified residue" description="Phosphoserine" evidence="15">
    <location>
        <position position="199"/>
    </location>
</feature>
<feature type="modified residue" description="3'-nitrotyrosine" evidence="13">
    <location>
        <position position="269"/>
    </location>
</feature>
<feature type="modified residue" description="Phosphoserine" evidence="1">
    <location>
        <position position="309"/>
    </location>
</feature>
<feature type="modified residue" description="Phosphothreonine" evidence="15">
    <location>
        <position position="322"/>
    </location>
</feature>
<feature type="cross-link" description="Glycyl lysine isopeptide (Lys-Gly) (interchain with G-Cter in ubiquitin)" evidence="2">
    <location>
        <position position="45"/>
    </location>
</feature>
<feature type="cross-link" description="Glycyl lysine isopeptide (Lys-Gly) (interchain with G-Cter in ubiquitin)" evidence="2">
    <location>
        <position position="107"/>
    </location>
</feature>
<feature type="cross-link" description="Glycyl lysine isopeptide (Lys-Gly) (interchain with G-Cter in ubiquitin)" evidence="2">
    <location>
        <position position="381"/>
    </location>
</feature>
<feature type="mutagenesis site" description="Abolishes localization to mitochondria in fat cells." evidence="8">
    <original>RVRTGRSIR</original>
    <variation>AVATGASIA</variation>
    <location>
        <begin position="130"/>
        <end position="138"/>
    </location>
</feature>
<feature type="mutagenesis site" description="Abolished creatine kinase activity." evidence="8">
    <original>C</original>
    <variation>S</variation>
    <location>
        <position position="283"/>
    </location>
</feature>
<feature type="sequence conflict" description="In Ref. 3; BAE28690." evidence="10" ref="3">
    <original>P</original>
    <variation>H</variation>
    <location>
        <position position="143"/>
    </location>
</feature>
<feature type="sequence conflict" description="In Ref. 3; BAE39162." evidence="10" ref="3">
    <original>I</original>
    <variation>M</variation>
    <location>
        <position position="217"/>
    </location>
</feature>
<accession>Q04447</accession>
<accession>Q3KQP4</accession>
<accession>Q3TKI3</accession>
<accession>Q3U5P5</accession>
<accession>Q3UF71</accession>
<accession>Q9CXK6</accession>